<sequence>MTEAMKITLSTQPADARWGDKATYSINNDGITLHLNGKDDLGLIQRAARKIDGLGIKQVALTGEGWDIERCWAFWAGYKGPKGVRTVMWPDLDDAQRQELDNRLTIIDWVRDTINAPAEELGPEQLAQRAVDLLCSVACDSVTYRITKGEDLREQNYMGLHTVGRGSERPPVLLALDYNPTGDKDAPVYACLVGKGITFDSGGYSIKQSAFMDSMKSDMGGAATVTGALAFAITRGLNKRVKLFLCCADNLISGNAFKLGDIIRYRNGKNVEVMNTDAEGRLVLADGLIDASAQHPELIIDMATLTGAAKTALGNDYHALFSFDDTLAGRLLTSAAQENEPFWRLPLAEFHRNQLPSNFAELNNTGSAAYPAGASTAAGFLSHFVENYREGWLHIDCSATYRKAPVEQWAAGATGLGVRTIANLLTA</sequence>
<protein>
    <recommendedName>
        <fullName evidence="1">Peptidase B</fullName>
        <ecNumber evidence="1">3.4.11.23</ecNumber>
    </recommendedName>
    <alternativeName>
        <fullName evidence="1">Aminopeptidase B</fullName>
    </alternativeName>
</protein>
<dbReference type="EC" id="3.4.11.23" evidence="1"/>
<dbReference type="EMBL" id="CP001144">
    <property type="protein sequence ID" value="ACH77840.1"/>
    <property type="molecule type" value="Genomic_DNA"/>
</dbReference>
<dbReference type="RefSeq" id="WP_000133534.1">
    <property type="nucleotide sequence ID" value="NC_011205.1"/>
</dbReference>
<dbReference type="SMR" id="B5FR78"/>
<dbReference type="MEROPS" id="M17.004"/>
<dbReference type="KEGG" id="sed:SeD_A2910"/>
<dbReference type="HOGENOM" id="CLU_013734_7_1_6"/>
<dbReference type="Proteomes" id="UP000008322">
    <property type="component" value="Chromosome"/>
</dbReference>
<dbReference type="GO" id="GO:0005737">
    <property type="term" value="C:cytoplasm"/>
    <property type="evidence" value="ECO:0007669"/>
    <property type="project" value="UniProtKB-SubCell"/>
</dbReference>
<dbReference type="GO" id="GO:0030145">
    <property type="term" value="F:manganese ion binding"/>
    <property type="evidence" value="ECO:0007669"/>
    <property type="project" value="UniProtKB-UniRule"/>
</dbReference>
<dbReference type="GO" id="GO:0070006">
    <property type="term" value="F:metalloaminopeptidase activity"/>
    <property type="evidence" value="ECO:0007669"/>
    <property type="project" value="InterPro"/>
</dbReference>
<dbReference type="GO" id="GO:0006508">
    <property type="term" value="P:proteolysis"/>
    <property type="evidence" value="ECO:0007669"/>
    <property type="project" value="UniProtKB-UniRule"/>
</dbReference>
<dbReference type="CDD" id="cd00433">
    <property type="entry name" value="Peptidase_M17"/>
    <property type="match status" value="1"/>
</dbReference>
<dbReference type="FunFam" id="3.40.630.10:FF:000037">
    <property type="entry name" value="Peptidase B"/>
    <property type="match status" value="1"/>
</dbReference>
<dbReference type="Gene3D" id="3.40.630.10">
    <property type="entry name" value="Zn peptidases"/>
    <property type="match status" value="1"/>
</dbReference>
<dbReference type="HAMAP" id="MF_00504">
    <property type="entry name" value="Aminopeptidase_M17"/>
    <property type="match status" value="1"/>
</dbReference>
<dbReference type="InterPro" id="IPR011356">
    <property type="entry name" value="Leucine_aapep/pepB"/>
</dbReference>
<dbReference type="InterPro" id="IPR047620">
    <property type="entry name" value="M17_PepB-like_N"/>
</dbReference>
<dbReference type="InterPro" id="IPR008330">
    <property type="entry name" value="Pept_M17_PepB"/>
</dbReference>
<dbReference type="InterPro" id="IPR000819">
    <property type="entry name" value="Peptidase_M17_C"/>
</dbReference>
<dbReference type="NCBIfam" id="NF003450">
    <property type="entry name" value="PRK05015.1"/>
    <property type="match status" value="1"/>
</dbReference>
<dbReference type="PANTHER" id="PTHR11963">
    <property type="entry name" value="LEUCINE AMINOPEPTIDASE-RELATED"/>
    <property type="match status" value="1"/>
</dbReference>
<dbReference type="PANTHER" id="PTHR11963:SF20">
    <property type="entry name" value="PEPTIDASE B"/>
    <property type="match status" value="1"/>
</dbReference>
<dbReference type="Pfam" id="PF12404">
    <property type="entry name" value="DUF3663"/>
    <property type="match status" value="1"/>
</dbReference>
<dbReference type="Pfam" id="PF00883">
    <property type="entry name" value="Peptidase_M17"/>
    <property type="match status" value="1"/>
</dbReference>
<dbReference type="PIRSF" id="PIRSF036388">
    <property type="entry name" value="Ctsl_amnpptdse_B"/>
    <property type="match status" value="1"/>
</dbReference>
<dbReference type="PRINTS" id="PR00481">
    <property type="entry name" value="LAMNOPPTDASE"/>
</dbReference>
<dbReference type="SUPFAM" id="SSF53187">
    <property type="entry name" value="Zn-dependent exopeptidases"/>
    <property type="match status" value="1"/>
</dbReference>
<dbReference type="PROSITE" id="PS00631">
    <property type="entry name" value="CYTOSOL_AP"/>
    <property type="match status" value="1"/>
</dbReference>
<comment type="function">
    <text evidence="1">Probably plays an important role in intracellular peptide degradation.</text>
</comment>
<comment type="catalytic activity">
    <reaction evidence="1">
        <text>Release of an N-terminal amino acid, Xaa, from a peptide or arylamide. Xaa is preferably Glu or Asp but may be other amino acids, including Leu, Met, His, Cys and Gln.</text>
        <dbReference type="EC" id="3.4.11.23"/>
    </reaction>
</comment>
<comment type="cofactor">
    <cofactor evidence="1">
        <name>Mn(2+)</name>
        <dbReference type="ChEBI" id="CHEBI:29035"/>
    </cofactor>
    <text evidence="1">Binds 2 manganese ions per subunit.</text>
</comment>
<comment type="subunit">
    <text evidence="1">Homohexamer.</text>
</comment>
<comment type="subcellular location">
    <subcellularLocation>
        <location evidence="1">Cytoplasm</location>
    </subcellularLocation>
</comment>
<comment type="similarity">
    <text evidence="1">Belongs to the peptidase M17 family.</text>
</comment>
<reference key="1">
    <citation type="journal article" date="2011" name="J. Bacteriol.">
        <title>Comparative genomics of 28 Salmonella enterica isolates: evidence for CRISPR-mediated adaptive sublineage evolution.</title>
        <authorList>
            <person name="Fricke W.F."/>
            <person name="Mammel M.K."/>
            <person name="McDermott P.F."/>
            <person name="Tartera C."/>
            <person name="White D.G."/>
            <person name="Leclerc J.E."/>
            <person name="Ravel J."/>
            <person name="Cebula T.A."/>
        </authorList>
    </citation>
    <scope>NUCLEOTIDE SEQUENCE [LARGE SCALE GENOMIC DNA]</scope>
    <source>
        <strain>CT_02021853</strain>
    </source>
</reference>
<proteinExistence type="inferred from homology"/>
<evidence type="ECO:0000255" key="1">
    <source>
        <dbReference type="HAMAP-Rule" id="MF_00504"/>
    </source>
</evidence>
<organism>
    <name type="scientific">Salmonella dublin (strain CT_02021853)</name>
    <dbReference type="NCBI Taxonomy" id="439851"/>
    <lineage>
        <taxon>Bacteria</taxon>
        <taxon>Pseudomonadati</taxon>
        <taxon>Pseudomonadota</taxon>
        <taxon>Gammaproteobacteria</taxon>
        <taxon>Enterobacterales</taxon>
        <taxon>Enterobacteriaceae</taxon>
        <taxon>Salmonella</taxon>
    </lineage>
</organism>
<accession>B5FR78</accession>
<name>PEPB_SALDC</name>
<keyword id="KW-0031">Aminopeptidase</keyword>
<keyword id="KW-0963">Cytoplasm</keyword>
<keyword id="KW-0378">Hydrolase</keyword>
<keyword id="KW-0464">Manganese</keyword>
<keyword id="KW-0479">Metal-binding</keyword>
<keyword id="KW-0645">Protease</keyword>
<feature type="chain" id="PRO_1000127013" description="Peptidase B">
    <location>
        <begin position="1"/>
        <end position="427"/>
    </location>
</feature>
<feature type="active site" evidence="1">
    <location>
        <position position="207"/>
    </location>
</feature>
<feature type="active site" evidence="1">
    <location>
        <position position="281"/>
    </location>
</feature>
<feature type="binding site" evidence="1">
    <location>
        <position position="195"/>
    </location>
    <ligand>
        <name>Mn(2+)</name>
        <dbReference type="ChEBI" id="CHEBI:29035"/>
        <label>2</label>
    </ligand>
</feature>
<feature type="binding site" evidence="1">
    <location>
        <position position="200"/>
    </location>
    <ligand>
        <name>Mn(2+)</name>
        <dbReference type="ChEBI" id="CHEBI:29035"/>
        <label>1</label>
    </ligand>
</feature>
<feature type="binding site" evidence="1">
    <location>
        <position position="200"/>
    </location>
    <ligand>
        <name>Mn(2+)</name>
        <dbReference type="ChEBI" id="CHEBI:29035"/>
        <label>2</label>
    </ligand>
</feature>
<feature type="binding site" evidence="1">
    <location>
        <position position="218"/>
    </location>
    <ligand>
        <name>Mn(2+)</name>
        <dbReference type="ChEBI" id="CHEBI:29035"/>
        <label>2</label>
    </ligand>
</feature>
<feature type="binding site" evidence="1">
    <location>
        <position position="277"/>
    </location>
    <ligand>
        <name>Mn(2+)</name>
        <dbReference type="ChEBI" id="CHEBI:29035"/>
        <label>1</label>
    </ligand>
</feature>
<feature type="binding site" evidence="1">
    <location>
        <position position="279"/>
    </location>
    <ligand>
        <name>Mn(2+)</name>
        <dbReference type="ChEBI" id="CHEBI:29035"/>
        <label>1</label>
    </ligand>
</feature>
<feature type="binding site" evidence="1">
    <location>
        <position position="279"/>
    </location>
    <ligand>
        <name>Mn(2+)</name>
        <dbReference type="ChEBI" id="CHEBI:29035"/>
        <label>2</label>
    </ligand>
</feature>
<gene>
    <name evidence="1" type="primary">pepB</name>
    <name type="ordered locus">SeD_A2910</name>
</gene>